<organism>
    <name type="scientific">Pseudomonas entomophila (strain L48)</name>
    <dbReference type="NCBI Taxonomy" id="384676"/>
    <lineage>
        <taxon>Bacteria</taxon>
        <taxon>Pseudomonadati</taxon>
        <taxon>Pseudomonadota</taxon>
        <taxon>Gammaproteobacteria</taxon>
        <taxon>Pseudomonadales</taxon>
        <taxon>Pseudomonadaceae</taxon>
        <taxon>Pseudomonas</taxon>
    </lineage>
</organism>
<gene>
    <name evidence="2" type="primary">ddl</name>
    <name type="ordered locus">PSEEN4483</name>
</gene>
<protein>
    <recommendedName>
        <fullName evidence="2">D-alanine--D-alanine ligase</fullName>
        <ecNumber evidence="2">6.3.2.4</ecNumber>
    </recommendedName>
    <alternativeName>
        <fullName evidence="2">D-Ala-D-Ala ligase</fullName>
    </alternativeName>
    <alternativeName>
        <fullName evidence="2">D-alanylalanine synthetase</fullName>
    </alternativeName>
</protein>
<dbReference type="EC" id="6.3.2.4" evidence="2"/>
<dbReference type="EMBL" id="CT573326">
    <property type="protein sequence ID" value="CAK17165.1"/>
    <property type="molecule type" value="Genomic_DNA"/>
</dbReference>
<dbReference type="RefSeq" id="WP_011535535.1">
    <property type="nucleotide sequence ID" value="NC_008027.1"/>
</dbReference>
<dbReference type="SMR" id="Q1I5C0"/>
<dbReference type="STRING" id="384676.PSEEN4483"/>
<dbReference type="GeneID" id="32807479"/>
<dbReference type="KEGG" id="pen:PSEEN4483"/>
<dbReference type="eggNOG" id="COG1181">
    <property type="taxonomic scope" value="Bacteria"/>
</dbReference>
<dbReference type="HOGENOM" id="CLU_039268_1_2_6"/>
<dbReference type="OrthoDB" id="9813261at2"/>
<dbReference type="UniPathway" id="UPA00219"/>
<dbReference type="Proteomes" id="UP000000658">
    <property type="component" value="Chromosome"/>
</dbReference>
<dbReference type="GO" id="GO:0005829">
    <property type="term" value="C:cytosol"/>
    <property type="evidence" value="ECO:0007669"/>
    <property type="project" value="TreeGrafter"/>
</dbReference>
<dbReference type="GO" id="GO:0005524">
    <property type="term" value="F:ATP binding"/>
    <property type="evidence" value="ECO:0007669"/>
    <property type="project" value="UniProtKB-KW"/>
</dbReference>
<dbReference type="GO" id="GO:0008716">
    <property type="term" value="F:D-alanine-D-alanine ligase activity"/>
    <property type="evidence" value="ECO:0007669"/>
    <property type="project" value="UniProtKB-UniRule"/>
</dbReference>
<dbReference type="GO" id="GO:0046872">
    <property type="term" value="F:metal ion binding"/>
    <property type="evidence" value="ECO:0007669"/>
    <property type="project" value="UniProtKB-KW"/>
</dbReference>
<dbReference type="GO" id="GO:0071555">
    <property type="term" value="P:cell wall organization"/>
    <property type="evidence" value="ECO:0007669"/>
    <property type="project" value="UniProtKB-KW"/>
</dbReference>
<dbReference type="GO" id="GO:0009252">
    <property type="term" value="P:peptidoglycan biosynthetic process"/>
    <property type="evidence" value="ECO:0007669"/>
    <property type="project" value="UniProtKB-UniRule"/>
</dbReference>
<dbReference type="GO" id="GO:0008360">
    <property type="term" value="P:regulation of cell shape"/>
    <property type="evidence" value="ECO:0007669"/>
    <property type="project" value="UniProtKB-KW"/>
</dbReference>
<dbReference type="FunFam" id="3.30.1490.20:FF:000007">
    <property type="entry name" value="D-alanine--D-alanine ligase"/>
    <property type="match status" value="1"/>
</dbReference>
<dbReference type="FunFam" id="3.30.470.20:FF:000008">
    <property type="entry name" value="D-alanine--D-alanine ligase"/>
    <property type="match status" value="1"/>
</dbReference>
<dbReference type="FunFam" id="3.40.50.20:FF:000013">
    <property type="entry name" value="D-alanine--D-alanine ligase"/>
    <property type="match status" value="1"/>
</dbReference>
<dbReference type="Gene3D" id="3.40.50.20">
    <property type="match status" value="1"/>
</dbReference>
<dbReference type="Gene3D" id="3.30.1490.20">
    <property type="entry name" value="ATP-grasp fold, A domain"/>
    <property type="match status" value="1"/>
</dbReference>
<dbReference type="Gene3D" id="3.30.470.20">
    <property type="entry name" value="ATP-grasp fold, B domain"/>
    <property type="match status" value="1"/>
</dbReference>
<dbReference type="HAMAP" id="MF_00047">
    <property type="entry name" value="Dala_Dala_lig"/>
    <property type="match status" value="1"/>
</dbReference>
<dbReference type="InterPro" id="IPR011761">
    <property type="entry name" value="ATP-grasp"/>
</dbReference>
<dbReference type="InterPro" id="IPR013815">
    <property type="entry name" value="ATP_grasp_subdomain_1"/>
</dbReference>
<dbReference type="InterPro" id="IPR000291">
    <property type="entry name" value="D-Ala_lig_Van_CS"/>
</dbReference>
<dbReference type="InterPro" id="IPR005905">
    <property type="entry name" value="D_ala_D_ala"/>
</dbReference>
<dbReference type="InterPro" id="IPR011095">
    <property type="entry name" value="Dala_Dala_lig_C"/>
</dbReference>
<dbReference type="InterPro" id="IPR011127">
    <property type="entry name" value="Dala_Dala_lig_N"/>
</dbReference>
<dbReference type="InterPro" id="IPR016185">
    <property type="entry name" value="PreATP-grasp_dom_sf"/>
</dbReference>
<dbReference type="NCBIfam" id="TIGR01205">
    <property type="entry name" value="D_ala_D_alaTIGR"/>
    <property type="match status" value="1"/>
</dbReference>
<dbReference type="NCBIfam" id="NF002378">
    <property type="entry name" value="PRK01372.1"/>
    <property type="match status" value="1"/>
</dbReference>
<dbReference type="PANTHER" id="PTHR23132">
    <property type="entry name" value="D-ALANINE--D-ALANINE LIGASE"/>
    <property type="match status" value="1"/>
</dbReference>
<dbReference type="PANTHER" id="PTHR23132:SF23">
    <property type="entry name" value="D-ALANINE--D-ALANINE LIGASE B"/>
    <property type="match status" value="1"/>
</dbReference>
<dbReference type="Pfam" id="PF07478">
    <property type="entry name" value="Dala_Dala_lig_C"/>
    <property type="match status" value="1"/>
</dbReference>
<dbReference type="Pfam" id="PF01820">
    <property type="entry name" value="Dala_Dala_lig_N"/>
    <property type="match status" value="2"/>
</dbReference>
<dbReference type="PIRSF" id="PIRSF039102">
    <property type="entry name" value="Ddl/VanB"/>
    <property type="match status" value="1"/>
</dbReference>
<dbReference type="SUPFAM" id="SSF56059">
    <property type="entry name" value="Glutathione synthetase ATP-binding domain-like"/>
    <property type="match status" value="1"/>
</dbReference>
<dbReference type="SUPFAM" id="SSF52440">
    <property type="entry name" value="PreATP-grasp domain"/>
    <property type="match status" value="1"/>
</dbReference>
<dbReference type="PROSITE" id="PS50975">
    <property type="entry name" value="ATP_GRASP"/>
    <property type="match status" value="1"/>
</dbReference>
<dbReference type="PROSITE" id="PS00843">
    <property type="entry name" value="DALA_DALA_LIGASE_1"/>
    <property type="match status" value="1"/>
</dbReference>
<dbReference type="PROSITE" id="PS00844">
    <property type="entry name" value="DALA_DALA_LIGASE_2"/>
    <property type="match status" value="1"/>
</dbReference>
<accession>Q1I5C0</accession>
<evidence type="ECO:0000250" key="1"/>
<evidence type="ECO:0000255" key="2">
    <source>
        <dbReference type="HAMAP-Rule" id="MF_00047"/>
    </source>
</evidence>
<keyword id="KW-0067">ATP-binding</keyword>
<keyword id="KW-0133">Cell shape</keyword>
<keyword id="KW-0961">Cell wall biogenesis/degradation</keyword>
<keyword id="KW-0963">Cytoplasm</keyword>
<keyword id="KW-0436">Ligase</keyword>
<keyword id="KW-0460">Magnesium</keyword>
<keyword id="KW-0464">Manganese</keyword>
<keyword id="KW-0479">Metal-binding</keyword>
<keyword id="KW-0547">Nucleotide-binding</keyword>
<keyword id="KW-0573">Peptidoglycan synthesis</keyword>
<comment type="function">
    <text evidence="2">Cell wall formation.</text>
</comment>
<comment type="catalytic activity">
    <reaction evidence="2">
        <text>2 D-alanine + ATP = D-alanyl-D-alanine + ADP + phosphate + H(+)</text>
        <dbReference type="Rhea" id="RHEA:11224"/>
        <dbReference type="ChEBI" id="CHEBI:15378"/>
        <dbReference type="ChEBI" id="CHEBI:30616"/>
        <dbReference type="ChEBI" id="CHEBI:43474"/>
        <dbReference type="ChEBI" id="CHEBI:57416"/>
        <dbReference type="ChEBI" id="CHEBI:57822"/>
        <dbReference type="ChEBI" id="CHEBI:456216"/>
        <dbReference type="EC" id="6.3.2.4"/>
    </reaction>
</comment>
<comment type="cofactor">
    <cofactor evidence="1">
        <name>Mg(2+)</name>
        <dbReference type="ChEBI" id="CHEBI:18420"/>
    </cofactor>
    <cofactor evidence="1">
        <name>Mn(2+)</name>
        <dbReference type="ChEBI" id="CHEBI:29035"/>
    </cofactor>
    <text evidence="1">Binds 2 magnesium or manganese ions per subunit.</text>
</comment>
<comment type="pathway">
    <text evidence="2">Cell wall biogenesis; peptidoglycan biosynthesis.</text>
</comment>
<comment type="subcellular location">
    <subcellularLocation>
        <location evidence="2">Cytoplasm</location>
    </subcellularLocation>
</comment>
<comment type="similarity">
    <text evidence="2">Belongs to the D-alanine--D-alanine ligase family.</text>
</comment>
<proteinExistence type="inferred from homology"/>
<name>DDL_PSEE4</name>
<feature type="chain" id="PRO_1000030485" description="D-alanine--D-alanine ligase">
    <location>
        <begin position="1"/>
        <end position="318"/>
    </location>
</feature>
<feature type="domain" description="ATP-grasp" evidence="2">
    <location>
        <begin position="116"/>
        <end position="311"/>
    </location>
</feature>
<feature type="binding site" evidence="2">
    <location>
        <begin position="142"/>
        <end position="197"/>
    </location>
    <ligand>
        <name>ATP</name>
        <dbReference type="ChEBI" id="CHEBI:30616"/>
    </ligand>
</feature>
<feature type="binding site" evidence="2">
    <location>
        <position position="265"/>
    </location>
    <ligand>
        <name>Mg(2+)</name>
        <dbReference type="ChEBI" id="CHEBI:18420"/>
        <label>1</label>
    </ligand>
</feature>
<feature type="binding site" evidence="2">
    <location>
        <position position="278"/>
    </location>
    <ligand>
        <name>Mg(2+)</name>
        <dbReference type="ChEBI" id="CHEBI:18420"/>
        <label>1</label>
    </ligand>
</feature>
<feature type="binding site" evidence="2">
    <location>
        <position position="278"/>
    </location>
    <ligand>
        <name>Mg(2+)</name>
        <dbReference type="ChEBI" id="CHEBI:18420"/>
        <label>2</label>
    </ligand>
</feature>
<feature type="binding site" evidence="2">
    <location>
        <position position="280"/>
    </location>
    <ligand>
        <name>Mg(2+)</name>
        <dbReference type="ChEBI" id="CHEBI:18420"/>
        <label>2</label>
    </ligand>
</feature>
<sequence length="318" mass="34098">MTSAYDKLHSTLDVKAFGRVAVLYGGKSAEREVSLKSGAAVIEALTSAGVDVVAIDVGDDLLARLQNEKIDRAFIILHGRGGEDGSMQGLLECLGIPYTGSGILASALAMDKLRTKQVWQSLGIPTPRHAVLASEQDCVAASAELGFPLIVKPAHEGSSIGMAKVNSEQELVAAWKDAAKYDSQVLVEQWIHGPEFTIAVLRGQVLPPIALGTPHVFYDYDAKYIANDTQYRIPCGLDSVKEQELIDLTARACDAIGIEGWGRLDVMQDEQGRFWLLEVNTAPGMTDHSLVPMAARAAGLDFQQLVLAILADSVATRG</sequence>
<reference key="1">
    <citation type="journal article" date="2006" name="Nat. Biotechnol.">
        <title>Complete genome sequence of the entomopathogenic and metabolically versatile soil bacterium Pseudomonas entomophila.</title>
        <authorList>
            <person name="Vodovar N."/>
            <person name="Vallenet D."/>
            <person name="Cruveiller S."/>
            <person name="Rouy Z."/>
            <person name="Barbe V."/>
            <person name="Acosta C."/>
            <person name="Cattolico L."/>
            <person name="Jubin C."/>
            <person name="Lajus A."/>
            <person name="Segurens B."/>
            <person name="Vacherie B."/>
            <person name="Wincker P."/>
            <person name="Weissenbach J."/>
            <person name="Lemaitre B."/>
            <person name="Medigue C."/>
            <person name="Boccard F."/>
        </authorList>
    </citation>
    <scope>NUCLEOTIDE SEQUENCE [LARGE SCALE GENOMIC DNA]</scope>
    <source>
        <strain>L48</strain>
    </source>
</reference>